<accession>O73795</accession>
<name>VM2MB_GLOBR</name>
<reference key="1">
    <citation type="submission" date="1998-03" db="EMBL/GenBank/DDBJ databases">
        <authorList>
            <person name="Jeon O.-H."/>
            <person name="Kim D.-S."/>
        </authorList>
    </citation>
    <scope>NUCLEOTIDE SEQUENCE [MRNA]</scope>
    <source>
        <tissue>Venom gland</tissue>
    </source>
</reference>
<evidence type="ECO:0000250" key="1"/>
<evidence type="ECO:0000250" key="2">
    <source>
        <dbReference type="UniProtKB" id="Q0NZX5"/>
    </source>
</evidence>
<evidence type="ECO:0000255" key="3"/>
<evidence type="ECO:0000255" key="4">
    <source>
        <dbReference type="PROSITE-ProRule" id="PRU00068"/>
    </source>
</evidence>
<evidence type="ECO:0000255" key="5">
    <source>
        <dbReference type="PROSITE-ProRule" id="PRU00276"/>
    </source>
</evidence>
<evidence type="ECO:0000305" key="6"/>
<proteinExistence type="evidence at transcript level"/>
<comment type="function">
    <molecule>Snake venom metalloproteinase Mt-b</molecule>
    <text evidence="1">Impairs hemostasis in the envenomed animal.</text>
</comment>
<comment type="function">
    <molecule>Disintegrin</molecule>
    <text evidence="1">Inhibits platelet aggregation induced by ADP, thrombin, platelet-activating factor and collagen. Acts by inhibiting fibrinogen interaction with platelet receptors GPIIb/GPIIIa (ITGA2B/ITGB3) (By similarity).</text>
</comment>
<comment type="cofactor">
    <cofactor evidence="6">
        <name>Zn(2+)</name>
        <dbReference type="ChEBI" id="CHEBI:29105"/>
    </cofactor>
    <text evidence="6">Binds 1 zinc ion per subunit.</text>
</comment>
<comment type="subunit">
    <text evidence="1">Monomer.</text>
</comment>
<comment type="subcellular location">
    <subcellularLocation>
        <location evidence="1">Secreted</location>
    </subcellularLocation>
</comment>
<comment type="tissue specificity">
    <text>Expressed by the venom gland.</text>
</comment>
<comment type="miscellaneous">
    <text>The disintegrin belongs to the medium disintegrin subfamily.</text>
</comment>
<comment type="similarity">
    <text evidence="6">Belongs to the venom metalloproteinase (M12B) family. P-II subfamily. P-IIa sub-subfamily.</text>
</comment>
<organism>
    <name type="scientific">Gloydius brevicauda</name>
    <name type="common">Korean slamosa snake</name>
    <name type="synonym">Agkistrodon halys brevicaudus</name>
    <dbReference type="NCBI Taxonomy" id="3148161"/>
    <lineage>
        <taxon>Eukaryota</taxon>
        <taxon>Metazoa</taxon>
        <taxon>Chordata</taxon>
        <taxon>Craniata</taxon>
        <taxon>Vertebrata</taxon>
        <taxon>Euteleostomi</taxon>
        <taxon>Lepidosauria</taxon>
        <taxon>Squamata</taxon>
        <taxon>Bifurcata</taxon>
        <taxon>Unidentata</taxon>
        <taxon>Episquamata</taxon>
        <taxon>Toxicofera</taxon>
        <taxon>Serpentes</taxon>
        <taxon>Colubroidea</taxon>
        <taxon>Viperidae</taxon>
        <taxon>Crotalinae</taxon>
        <taxon>Gloydius</taxon>
    </lineage>
</organism>
<sequence>MIQVLLVIICLAAFPYQGTSIILESGNVNDYEVVYPRKVTALPKGAVQPKYEDAMQYELKVNGEPVVLHLPKNKALPSKDYIETHYSPDGRKITTNPPVEDHCYYHGRIQNDADSTASISACNGLKGHFKLQGETYLIEPLKLSNSEAHAVYKYEDVEKEDEAPKMCGVTQNWESYEPIKYEDVEKEDEAPKMCGVTQNWESYEPIKKASQSNLTPAHQRYIELVIVADHGMFTKYNGDSDKIREWVRQMVNTVDEIYSYMYIDVALAGLQIWSNEDLINVQPAAPHTLDSFGKWRERDLLHRIHHDNAMLLTAIDFDGPTIGLAYVGTMSNPKGSTGVVQDHSTINFRVAVTMAHEIGHNLGIHHDTGSCSCGGYSCIMSPVISHEPSKYFSDCSYTQCWDFIMNQKPQCILNKPLRTDTVSTPVSGNELLEAGEECDCGSPGNPCCDAATCKLRQGAQCAEGLCCDQCRFMKEGTICRRGRGDDLDDYCNGISAGCPRNPFHA</sequence>
<keyword id="KW-0106">Calcium</keyword>
<keyword id="KW-1217">Cell adhesion impairing toxin</keyword>
<keyword id="KW-1015">Disulfide bond</keyword>
<keyword id="KW-1199">Hemostasis impairing toxin</keyword>
<keyword id="KW-0378">Hydrolase</keyword>
<keyword id="KW-0479">Metal-binding</keyword>
<keyword id="KW-0482">Metalloprotease</keyword>
<keyword id="KW-1201">Platelet aggregation inhibiting toxin</keyword>
<keyword id="KW-0645">Protease</keyword>
<keyword id="KW-0677">Repeat</keyword>
<keyword id="KW-0964">Secreted</keyword>
<keyword id="KW-0732">Signal</keyword>
<keyword id="KW-0800">Toxin</keyword>
<keyword id="KW-0862">Zinc</keyword>
<keyword id="KW-0865">Zymogen</keyword>
<dbReference type="EC" id="3.4.24.-"/>
<dbReference type="EMBL" id="AF051788">
    <property type="protein sequence ID" value="AAD02653.1"/>
    <property type="molecule type" value="mRNA"/>
</dbReference>
<dbReference type="SMR" id="O73795"/>
<dbReference type="MEROPS" id="M12.326"/>
<dbReference type="GO" id="GO:0005576">
    <property type="term" value="C:extracellular region"/>
    <property type="evidence" value="ECO:0007669"/>
    <property type="project" value="UniProtKB-SubCell"/>
</dbReference>
<dbReference type="GO" id="GO:0005886">
    <property type="term" value="C:plasma membrane"/>
    <property type="evidence" value="ECO:0007669"/>
    <property type="project" value="TreeGrafter"/>
</dbReference>
<dbReference type="GO" id="GO:0046872">
    <property type="term" value="F:metal ion binding"/>
    <property type="evidence" value="ECO:0007669"/>
    <property type="project" value="UniProtKB-KW"/>
</dbReference>
<dbReference type="GO" id="GO:0004222">
    <property type="term" value="F:metalloendopeptidase activity"/>
    <property type="evidence" value="ECO:0007669"/>
    <property type="project" value="InterPro"/>
</dbReference>
<dbReference type="GO" id="GO:0090729">
    <property type="term" value="F:toxin activity"/>
    <property type="evidence" value="ECO:0007669"/>
    <property type="project" value="UniProtKB-KW"/>
</dbReference>
<dbReference type="GO" id="GO:0006508">
    <property type="term" value="P:proteolysis"/>
    <property type="evidence" value="ECO:0007669"/>
    <property type="project" value="UniProtKB-KW"/>
</dbReference>
<dbReference type="CDD" id="cd04269">
    <property type="entry name" value="ZnMc_adamalysin_II_like"/>
    <property type="match status" value="1"/>
</dbReference>
<dbReference type="FunFam" id="3.40.390.10:FF:000002">
    <property type="entry name" value="Disintegrin and metalloproteinase domain-containing protein 22"/>
    <property type="match status" value="1"/>
</dbReference>
<dbReference type="FunFam" id="4.10.70.10:FF:000005">
    <property type="entry name" value="Zinc metalloproteinase/disintegrin"/>
    <property type="match status" value="1"/>
</dbReference>
<dbReference type="Gene3D" id="3.40.390.10">
    <property type="entry name" value="Collagenase (Catalytic Domain)"/>
    <property type="match status" value="1"/>
</dbReference>
<dbReference type="Gene3D" id="4.10.70.10">
    <property type="entry name" value="Disintegrin domain"/>
    <property type="match status" value="1"/>
</dbReference>
<dbReference type="InterPro" id="IPR018358">
    <property type="entry name" value="Disintegrin_CS"/>
</dbReference>
<dbReference type="InterPro" id="IPR001762">
    <property type="entry name" value="Disintegrin_dom"/>
</dbReference>
<dbReference type="InterPro" id="IPR036436">
    <property type="entry name" value="Disintegrin_dom_sf"/>
</dbReference>
<dbReference type="InterPro" id="IPR024079">
    <property type="entry name" value="MetalloPept_cat_dom_sf"/>
</dbReference>
<dbReference type="InterPro" id="IPR001590">
    <property type="entry name" value="Peptidase_M12B"/>
</dbReference>
<dbReference type="InterPro" id="IPR002870">
    <property type="entry name" value="Peptidase_M12B_N"/>
</dbReference>
<dbReference type="InterPro" id="IPR034027">
    <property type="entry name" value="Reprolysin_adamalysin"/>
</dbReference>
<dbReference type="PANTHER" id="PTHR11905">
    <property type="entry name" value="ADAM A DISINTEGRIN AND METALLOPROTEASE DOMAIN"/>
    <property type="match status" value="1"/>
</dbReference>
<dbReference type="PANTHER" id="PTHR11905:SF32">
    <property type="entry name" value="DISINTEGRIN AND METALLOPROTEINASE DOMAIN-CONTAINING PROTEIN 28"/>
    <property type="match status" value="1"/>
</dbReference>
<dbReference type="Pfam" id="PF00200">
    <property type="entry name" value="Disintegrin"/>
    <property type="match status" value="1"/>
</dbReference>
<dbReference type="Pfam" id="PF01562">
    <property type="entry name" value="Pep_M12B_propep"/>
    <property type="match status" value="1"/>
</dbReference>
<dbReference type="Pfam" id="PF01421">
    <property type="entry name" value="Reprolysin"/>
    <property type="match status" value="1"/>
</dbReference>
<dbReference type="PRINTS" id="PR00289">
    <property type="entry name" value="DISINTEGRIN"/>
</dbReference>
<dbReference type="SMART" id="SM00050">
    <property type="entry name" value="DISIN"/>
    <property type="match status" value="1"/>
</dbReference>
<dbReference type="SUPFAM" id="SSF57552">
    <property type="entry name" value="Blood coagulation inhibitor (disintegrin)"/>
    <property type="match status" value="1"/>
</dbReference>
<dbReference type="SUPFAM" id="SSF55486">
    <property type="entry name" value="Metalloproteases ('zincins'), catalytic domain"/>
    <property type="match status" value="1"/>
</dbReference>
<dbReference type="PROSITE" id="PS50215">
    <property type="entry name" value="ADAM_MEPRO"/>
    <property type="match status" value="1"/>
</dbReference>
<dbReference type="PROSITE" id="PS00427">
    <property type="entry name" value="DISINTEGRIN_1"/>
    <property type="match status" value="1"/>
</dbReference>
<dbReference type="PROSITE" id="PS50214">
    <property type="entry name" value="DISINTEGRIN_2"/>
    <property type="match status" value="1"/>
</dbReference>
<dbReference type="PROSITE" id="PS00142">
    <property type="entry name" value="ZINC_PROTEASE"/>
    <property type="match status" value="1"/>
</dbReference>
<feature type="signal peptide" evidence="3">
    <location>
        <begin position="1"/>
        <end position="20"/>
    </location>
</feature>
<feature type="propeptide" id="PRO_0000340289" evidence="1">
    <location>
        <begin position="21"/>
        <end position="214"/>
    </location>
</feature>
<feature type="chain" id="PRO_0000340290" description="Snake venom metalloproteinase Mt-b">
    <location>
        <begin position="215"/>
        <end position="416"/>
    </location>
</feature>
<feature type="propeptide" id="PRO_0000340291" evidence="1">
    <location>
        <begin position="417"/>
        <end position="432"/>
    </location>
</feature>
<feature type="chain" id="PRO_0000340292" description="Disintegrin">
    <location>
        <begin position="433"/>
        <end position="505"/>
    </location>
</feature>
<feature type="repeat" description="1">
    <location>
        <begin position="153"/>
        <end position="179"/>
    </location>
</feature>
<feature type="repeat" description="2">
    <location>
        <begin position="180"/>
        <end position="206"/>
    </location>
</feature>
<feature type="domain" description="Peptidase M12B" evidence="5">
    <location>
        <begin position="220"/>
        <end position="416"/>
    </location>
</feature>
<feature type="domain" description="Disintegrin" evidence="4">
    <location>
        <begin position="424"/>
        <end position="505"/>
    </location>
</feature>
<feature type="short sequence motif" description="Cell attachment site">
    <location>
        <begin position="483"/>
        <end position="485"/>
    </location>
</feature>
<feature type="active site" evidence="5">
    <location>
        <position position="357"/>
    </location>
</feature>
<feature type="binding site" evidence="1">
    <location>
        <position position="223"/>
    </location>
    <ligand>
        <name>Ca(2+)</name>
        <dbReference type="ChEBI" id="CHEBI:29108"/>
    </ligand>
</feature>
<feature type="binding site" evidence="1">
    <location>
        <position position="307"/>
    </location>
    <ligand>
        <name>Ca(2+)</name>
        <dbReference type="ChEBI" id="CHEBI:29108"/>
    </ligand>
</feature>
<feature type="binding site" evidence="5">
    <location>
        <position position="356"/>
    </location>
    <ligand>
        <name>Zn(2+)</name>
        <dbReference type="ChEBI" id="CHEBI:29105"/>
        <note>catalytic</note>
    </ligand>
</feature>
<feature type="binding site" evidence="5">
    <location>
        <position position="360"/>
    </location>
    <ligand>
        <name>Zn(2+)</name>
        <dbReference type="ChEBI" id="CHEBI:29105"/>
        <note>catalytic</note>
    </ligand>
</feature>
<feature type="binding site" evidence="5">
    <location>
        <position position="366"/>
    </location>
    <ligand>
        <name>Zn(2+)</name>
        <dbReference type="ChEBI" id="CHEBI:29105"/>
        <note>catalytic</note>
    </ligand>
</feature>
<feature type="binding site" evidence="1">
    <location>
        <position position="411"/>
    </location>
    <ligand>
        <name>Ca(2+)</name>
        <dbReference type="ChEBI" id="CHEBI:29108"/>
    </ligand>
</feature>
<feature type="binding site" evidence="1">
    <location>
        <position position="414"/>
    </location>
    <ligand>
        <name>Ca(2+)</name>
        <dbReference type="ChEBI" id="CHEBI:29108"/>
    </ligand>
</feature>
<feature type="disulfide bond" evidence="5">
    <location>
        <begin position="371"/>
        <end position="395"/>
    </location>
</feature>
<feature type="disulfide bond" evidence="5">
    <location>
        <begin position="373"/>
        <end position="378"/>
    </location>
</feature>
<feature type="disulfide bond" evidence="2">
    <location>
        <begin position="438"/>
        <end position="453"/>
    </location>
</feature>
<feature type="disulfide bond" evidence="2">
    <location>
        <begin position="440"/>
        <end position="448"/>
    </location>
</feature>
<feature type="disulfide bond" evidence="2">
    <location>
        <begin position="447"/>
        <end position="470"/>
    </location>
</feature>
<feature type="disulfide bond" evidence="2">
    <location>
        <begin position="461"/>
        <end position="467"/>
    </location>
</feature>
<feature type="disulfide bond" evidence="2">
    <location>
        <begin position="466"/>
        <end position="491"/>
    </location>
</feature>
<feature type="disulfide bond" evidence="2 4">
    <location>
        <begin position="479"/>
        <end position="498"/>
    </location>
</feature>
<protein>
    <recommendedName>
        <fullName>Zinc metalloproteinase/disintegrin</fullName>
    </recommendedName>
    <component>
        <recommendedName>
            <fullName>Snake venom metalloproteinase Mt-b</fullName>
            <shortName>SVMP</shortName>
            <ecNumber>3.4.24.-</ecNumber>
        </recommendedName>
    </component>
    <component>
        <recommendedName>
            <fullName>Disintegrin</fullName>
        </recommendedName>
    </component>
</protein>